<dbReference type="EC" id="1.10.3.9" evidence="1"/>
<dbReference type="EMBL" id="DQ231562">
    <property type="protein sequence ID" value="ABB90023.1"/>
    <property type="molecule type" value="Genomic_DNA"/>
</dbReference>
<dbReference type="EMBL" id="DQ386163">
    <property type="protein sequence ID" value="ABD47037.1"/>
    <property type="molecule type" value="Genomic_DNA"/>
</dbReference>
<dbReference type="RefSeq" id="YP_635619.1">
    <property type="nucleotide sequence ID" value="NC_008096.2"/>
</dbReference>
<dbReference type="SMR" id="Q2VEJ6"/>
<dbReference type="FunCoup" id="Q2VEJ6">
    <property type="interactions" value="296"/>
</dbReference>
<dbReference type="STRING" id="4113.Q2VEJ6"/>
<dbReference type="PaxDb" id="4113-PGSC0003DMT400010772"/>
<dbReference type="GeneID" id="4099946"/>
<dbReference type="KEGG" id="sot:4099946"/>
<dbReference type="eggNOG" id="KOG1144">
    <property type="taxonomic scope" value="Eukaryota"/>
</dbReference>
<dbReference type="InParanoid" id="Q2VEJ6"/>
<dbReference type="OrthoDB" id="143at2759"/>
<dbReference type="Proteomes" id="UP000011115">
    <property type="component" value="Unassembled WGS sequence"/>
</dbReference>
<dbReference type="ExpressionAtlas" id="Q2VEJ6">
    <property type="expression patterns" value="baseline and differential"/>
</dbReference>
<dbReference type="GO" id="GO:0009535">
    <property type="term" value="C:chloroplast thylakoid membrane"/>
    <property type="evidence" value="ECO:0007669"/>
    <property type="project" value="UniProtKB-SubCell"/>
</dbReference>
<dbReference type="GO" id="GO:0009523">
    <property type="term" value="C:photosystem II"/>
    <property type="evidence" value="ECO:0000318"/>
    <property type="project" value="GO_Central"/>
</dbReference>
<dbReference type="GO" id="GO:0016168">
    <property type="term" value="F:chlorophyll binding"/>
    <property type="evidence" value="ECO:0007669"/>
    <property type="project" value="UniProtKB-UniRule"/>
</dbReference>
<dbReference type="GO" id="GO:0045156">
    <property type="term" value="F:electron transporter, transferring electrons within the cyclic electron transport pathway of photosynthesis activity"/>
    <property type="evidence" value="ECO:0007669"/>
    <property type="project" value="InterPro"/>
</dbReference>
<dbReference type="GO" id="GO:0005506">
    <property type="term" value="F:iron ion binding"/>
    <property type="evidence" value="ECO:0007669"/>
    <property type="project" value="UniProtKB-UniRule"/>
</dbReference>
<dbReference type="GO" id="GO:0016682">
    <property type="term" value="F:oxidoreductase activity, acting on diphenols and related substances as donors, oxygen as acceptor"/>
    <property type="evidence" value="ECO:0007669"/>
    <property type="project" value="UniProtKB-UniRule"/>
</dbReference>
<dbReference type="GO" id="GO:0010242">
    <property type="term" value="F:oxygen evolving activity"/>
    <property type="evidence" value="ECO:0007669"/>
    <property type="project" value="UniProtKB-EC"/>
</dbReference>
<dbReference type="GO" id="GO:0009772">
    <property type="term" value="P:photosynthetic electron transport in photosystem II"/>
    <property type="evidence" value="ECO:0007669"/>
    <property type="project" value="InterPro"/>
</dbReference>
<dbReference type="GO" id="GO:0009635">
    <property type="term" value="P:response to herbicide"/>
    <property type="evidence" value="ECO:0007669"/>
    <property type="project" value="UniProtKB-KW"/>
</dbReference>
<dbReference type="CDD" id="cd09289">
    <property type="entry name" value="Photosystem-II_D1"/>
    <property type="match status" value="1"/>
</dbReference>
<dbReference type="FunFam" id="1.20.85.10:FF:000002">
    <property type="entry name" value="Photosystem II protein D1"/>
    <property type="match status" value="1"/>
</dbReference>
<dbReference type="Gene3D" id="1.20.85.10">
    <property type="entry name" value="Photosystem II protein D1-like"/>
    <property type="match status" value="1"/>
</dbReference>
<dbReference type="HAMAP" id="MF_01379">
    <property type="entry name" value="PSII_PsbA_D1"/>
    <property type="match status" value="1"/>
</dbReference>
<dbReference type="InterPro" id="IPR055266">
    <property type="entry name" value="D1/D2"/>
</dbReference>
<dbReference type="InterPro" id="IPR036854">
    <property type="entry name" value="Photo_II_D1/D2_sf"/>
</dbReference>
<dbReference type="InterPro" id="IPR000484">
    <property type="entry name" value="Photo_RC_L/M"/>
</dbReference>
<dbReference type="InterPro" id="IPR055265">
    <property type="entry name" value="Photo_RC_L/M_CS"/>
</dbReference>
<dbReference type="InterPro" id="IPR005867">
    <property type="entry name" value="PSII_D1"/>
</dbReference>
<dbReference type="NCBIfam" id="TIGR01151">
    <property type="entry name" value="psbA"/>
    <property type="match status" value="1"/>
</dbReference>
<dbReference type="PANTHER" id="PTHR33149:SF12">
    <property type="entry name" value="PHOTOSYSTEM II D2 PROTEIN"/>
    <property type="match status" value="1"/>
</dbReference>
<dbReference type="PANTHER" id="PTHR33149">
    <property type="entry name" value="PHOTOSYSTEM II PROTEIN D1"/>
    <property type="match status" value="1"/>
</dbReference>
<dbReference type="Pfam" id="PF00124">
    <property type="entry name" value="Photo_RC"/>
    <property type="match status" value="1"/>
</dbReference>
<dbReference type="PRINTS" id="PR00256">
    <property type="entry name" value="REACTNCENTRE"/>
</dbReference>
<dbReference type="SUPFAM" id="SSF81483">
    <property type="entry name" value="Bacterial photosystem II reaction centre, L and M subunits"/>
    <property type="match status" value="1"/>
</dbReference>
<dbReference type="PROSITE" id="PS00244">
    <property type="entry name" value="REACTION_CENTER"/>
    <property type="match status" value="1"/>
</dbReference>
<evidence type="ECO:0000255" key="1">
    <source>
        <dbReference type="HAMAP-Rule" id="MF_01379"/>
    </source>
</evidence>
<comment type="function">
    <text evidence="1">Photosystem II (PSII) is a light-driven water:plastoquinone oxidoreductase that uses light energy to abstract electrons from H(2)O, generating O(2) and a proton gradient subsequently used for ATP formation. It consists of a core antenna complex that captures photons, and an electron transfer chain that converts photonic excitation into a charge separation. The D1/D2 (PsbA/PsbD) reaction center heterodimer binds P680, the primary electron donor of PSII as well as several subsequent electron acceptors.</text>
</comment>
<comment type="catalytic activity">
    <reaction evidence="1">
        <text>2 a plastoquinone + 4 hnu + 2 H2O = 2 a plastoquinol + O2</text>
        <dbReference type="Rhea" id="RHEA:36359"/>
        <dbReference type="Rhea" id="RHEA-COMP:9561"/>
        <dbReference type="Rhea" id="RHEA-COMP:9562"/>
        <dbReference type="ChEBI" id="CHEBI:15377"/>
        <dbReference type="ChEBI" id="CHEBI:15379"/>
        <dbReference type="ChEBI" id="CHEBI:17757"/>
        <dbReference type="ChEBI" id="CHEBI:30212"/>
        <dbReference type="ChEBI" id="CHEBI:62192"/>
        <dbReference type="EC" id="1.10.3.9"/>
    </reaction>
</comment>
<comment type="cofactor">
    <text evidence="1">The D1/D2 heterodimer binds P680, chlorophylls that are the primary electron donor of PSII, and subsequent electron acceptors. It shares a non-heme iron and each subunit binds pheophytin, quinone, additional chlorophylls, carotenoids and lipids. D1 provides most of the ligands for the Mn4-Ca-O5 cluster of the oxygen-evolving complex (OEC). There is also a Cl(-1) ion associated with D1 and D2, which is required for oxygen evolution. The PSII complex binds additional chlorophylls, carotenoids and specific lipids.</text>
</comment>
<comment type="subunit">
    <text evidence="1">PSII is composed of 1 copy each of membrane proteins PsbA, PsbB, PsbC, PsbD, PsbE, PsbF, PsbH, PsbI, PsbJ, PsbK, PsbL, PsbM, PsbT, PsbX, PsbY, PsbZ, Psb30/Ycf12, at least 3 peripheral proteins of the oxygen-evolving complex and a large number of cofactors. It forms dimeric complexes.</text>
</comment>
<comment type="subcellular location">
    <subcellularLocation>
        <location evidence="1">Plastid</location>
        <location evidence="1">Chloroplast thylakoid membrane</location>
        <topology evidence="1">Multi-pass membrane protein</topology>
    </subcellularLocation>
</comment>
<comment type="PTM">
    <text evidence="1">Tyr-161 forms a radical intermediate that is referred to as redox-active TyrZ, YZ or Y-Z.</text>
</comment>
<comment type="PTM">
    <text evidence="1">C-terminally processed by CTPA; processing is essential to allow assembly of the oxygen-evolving complex and thus photosynthetic growth.</text>
</comment>
<comment type="miscellaneous">
    <text evidence="1">2 of the reaction center chlorophylls (ChlD1 and ChlD2) are entirely coordinated by water.</text>
</comment>
<comment type="miscellaneous">
    <text evidence="1">Herbicides such as atrazine, BNT, diuron or ioxynil bind in the Q(B) binding site and block subsequent electron transfer.</text>
</comment>
<comment type="similarity">
    <text evidence="1">Belongs to the reaction center PufL/M/PsbA/D family.</text>
</comment>
<protein>
    <recommendedName>
        <fullName evidence="1">Photosystem II protein D1</fullName>
        <shortName evidence="1">PSII D1 protein</shortName>
        <ecNumber evidence="1">1.10.3.9</ecNumber>
    </recommendedName>
    <alternativeName>
        <fullName evidence="1">Photosystem II Q(B) protein</fullName>
    </alternativeName>
</protein>
<accession>Q2VEJ6</accession>
<feature type="initiator methionine" description="Removed" evidence="1">
    <location>
        <position position="1"/>
    </location>
</feature>
<feature type="chain" id="PRO_0000277565" description="Photosystem II protein D1" evidence="1">
    <location>
        <begin position="2"/>
        <end position="344"/>
    </location>
</feature>
<feature type="propeptide" id="PRO_0000316485" evidence="1">
    <location>
        <begin position="345"/>
        <end position="353"/>
    </location>
</feature>
<feature type="transmembrane region" description="Helical" evidence="1">
    <location>
        <begin position="29"/>
        <end position="46"/>
    </location>
</feature>
<feature type="transmembrane region" description="Helical" evidence="1">
    <location>
        <begin position="118"/>
        <end position="133"/>
    </location>
</feature>
<feature type="transmembrane region" description="Helical" evidence="1">
    <location>
        <begin position="142"/>
        <end position="156"/>
    </location>
</feature>
<feature type="transmembrane region" description="Helical" evidence="1">
    <location>
        <begin position="197"/>
        <end position="218"/>
    </location>
</feature>
<feature type="transmembrane region" description="Helical" evidence="1">
    <location>
        <begin position="274"/>
        <end position="288"/>
    </location>
</feature>
<feature type="binding site" description="axial binding residue" evidence="1">
    <location>
        <position position="118"/>
    </location>
    <ligand>
        <name>chlorophyll a</name>
        <dbReference type="ChEBI" id="CHEBI:58416"/>
        <label>ChlzD1</label>
    </ligand>
    <ligandPart>
        <name>Mg</name>
        <dbReference type="ChEBI" id="CHEBI:25107"/>
    </ligandPart>
</feature>
<feature type="binding site" evidence="1">
    <location>
        <position position="126"/>
    </location>
    <ligand>
        <name>pheophytin a</name>
        <dbReference type="ChEBI" id="CHEBI:136840"/>
        <label>D1</label>
    </ligand>
</feature>
<feature type="binding site" evidence="1">
    <location>
        <position position="170"/>
    </location>
    <ligand>
        <name>[CaMn4O5] cluster</name>
        <dbReference type="ChEBI" id="CHEBI:189552"/>
    </ligand>
</feature>
<feature type="binding site" evidence="1">
    <location>
        <position position="189"/>
    </location>
    <ligand>
        <name>[CaMn4O5] cluster</name>
        <dbReference type="ChEBI" id="CHEBI:189552"/>
    </ligand>
</feature>
<feature type="binding site" description="axial binding residue" evidence="1">
    <location>
        <position position="198"/>
    </location>
    <ligand>
        <name>chlorophyll a</name>
        <dbReference type="ChEBI" id="CHEBI:58416"/>
        <label>PD1</label>
    </ligand>
    <ligandPart>
        <name>Mg</name>
        <dbReference type="ChEBI" id="CHEBI:25107"/>
    </ligandPart>
</feature>
<feature type="binding site" evidence="1">
    <location>
        <position position="215"/>
    </location>
    <ligand>
        <name>a quinone</name>
        <dbReference type="ChEBI" id="CHEBI:132124"/>
        <label>B</label>
    </ligand>
</feature>
<feature type="binding site" evidence="1">
    <location>
        <position position="215"/>
    </location>
    <ligand>
        <name>Fe cation</name>
        <dbReference type="ChEBI" id="CHEBI:24875"/>
        <note>ligand shared with heterodimeric partner</note>
    </ligand>
</feature>
<feature type="binding site" evidence="1">
    <location>
        <begin position="264"/>
        <end position="265"/>
    </location>
    <ligand>
        <name>a quinone</name>
        <dbReference type="ChEBI" id="CHEBI:132124"/>
        <label>B</label>
    </ligand>
</feature>
<feature type="binding site" evidence="1">
    <location>
        <position position="272"/>
    </location>
    <ligand>
        <name>Fe cation</name>
        <dbReference type="ChEBI" id="CHEBI:24875"/>
        <note>ligand shared with heterodimeric partner</note>
    </ligand>
</feature>
<feature type="binding site" evidence="1">
    <location>
        <position position="332"/>
    </location>
    <ligand>
        <name>[CaMn4O5] cluster</name>
        <dbReference type="ChEBI" id="CHEBI:189552"/>
    </ligand>
</feature>
<feature type="binding site" evidence="1">
    <location>
        <position position="333"/>
    </location>
    <ligand>
        <name>[CaMn4O5] cluster</name>
        <dbReference type="ChEBI" id="CHEBI:189552"/>
    </ligand>
</feature>
<feature type="binding site" evidence="1">
    <location>
        <position position="342"/>
    </location>
    <ligand>
        <name>[CaMn4O5] cluster</name>
        <dbReference type="ChEBI" id="CHEBI:189552"/>
    </ligand>
</feature>
<feature type="binding site" evidence="1">
    <location>
        <position position="344"/>
    </location>
    <ligand>
        <name>[CaMn4O5] cluster</name>
        <dbReference type="ChEBI" id="CHEBI:189552"/>
    </ligand>
</feature>
<feature type="site" description="Tyrosine radical intermediate" evidence="1">
    <location>
        <position position="161"/>
    </location>
</feature>
<feature type="site" description="Stabilizes free radical intermediate" evidence="1">
    <location>
        <position position="190"/>
    </location>
</feature>
<feature type="site" description="Cleavage; by CTPA" evidence="1">
    <location>
        <begin position="344"/>
        <end position="345"/>
    </location>
</feature>
<feature type="modified residue" description="N-acetylthreonine" evidence="1">
    <location>
        <position position="2"/>
    </location>
</feature>
<feature type="modified residue" description="Phosphothreonine" evidence="1">
    <location>
        <position position="2"/>
    </location>
</feature>
<reference key="1">
    <citation type="journal article" date="2006" name="Plant Cell Rep.">
        <title>The complete chloroplast genome sequences of Solanum tuberosum and comparative analysis with Solanaceae species identified the presence of a 241-bp deletion in cultivated potato chloroplast DNA sequence.</title>
        <authorList>
            <person name="Chung H.-J."/>
            <person name="Jung J.D."/>
            <person name="Park H.-W."/>
            <person name="Kim J.-H."/>
            <person name="Cha H.W."/>
            <person name="Min S.R."/>
            <person name="Jeong W.-J."/>
            <person name="Liu J.R."/>
        </authorList>
    </citation>
    <scope>NUCLEOTIDE SEQUENCE [LARGE SCALE GENOMIC DNA]</scope>
    <source>
        <strain>cv. Desiree</strain>
    </source>
</reference>
<reference key="2">
    <citation type="submission" date="2006-02" db="EMBL/GenBank/DDBJ databases">
        <title>Complete chloroplast genome sequences of Solanum tuberosum cultivar Desiree and comparative analyses with other Solanaceae genomes.</title>
        <authorList>
            <person name="Gargano D."/>
            <person name="Scotti N."/>
            <person name="Vezzi A."/>
            <person name="Bilardi A."/>
            <person name="Valle G."/>
            <person name="Grillo S."/>
            <person name="Cardi T."/>
        </authorList>
    </citation>
    <scope>NUCLEOTIDE SEQUENCE [LARGE SCALE GENOMIC DNA]</scope>
    <source>
        <strain>cv. Desiree</strain>
    </source>
</reference>
<proteinExistence type="inferred from homology"/>
<organism>
    <name type="scientific">Solanum tuberosum</name>
    <name type="common">Potato</name>
    <dbReference type="NCBI Taxonomy" id="4113"/>
    <lineage>
        <taxon>Eukaryota</taxon>
        <taxon>Viridiplantae</taxon>
        <taxon>Streptophyta</taxon>
        <taxon>Embryophyta</taxon>
        <taxon>Tracheophyta</taxon>
        <taxon>Spermatophyta</taxon>
        <taxon>Magnoliopsida</taxon>
        <taxon>eudicotyledons</taxon>
        <taxon>Gunneridae</taxon>
        <taxon>Pentapetalae</taxon>
        <taxon>asterids</taxon>
        <taxon>lamiids</taxon>
        <taxon>Solanales</taxon>
        <taxon>Solanaceae</taxon>
        <taxon>Solanoideae</taxon>
        <taxon>Solaneae</taxon>
        <taxon>Solanum</taxon>
    </lineage>
</organism>
<geneLocation type="chloroplast"/>
<sequence length="353" mass="38951">MTAILERRESESLWGRFCNWITSTENRLYIGWFGVLMIPTLLTATSVFIIAFIAAPPVDIDGIREPVSGSLLYGNNIISGAIIPTSAAIGLHFYPIWEAASVDEWLYNGGPYELIVLHFLLGVACYMGREWELSFRLGMRPWIAVAYSAPVAAATAVFLIYPIGQGSFSDGMPLGISGTFNFMIVFQAEHNILMHPFHMLGVAGVFGGSLFSAMHGSLVTSSLIRETTENESANEGYRFGQEEETYNIVAAHGYFGRLIFQYASFNNSRSLHFFLAAWPVVGIWFTALGISTMAFNLNGFNFNQSVVDSQGRVINTWADIINRANLGMEVMHERNAHNFPLDLAAIEAPSTNG</sequence>
<keyword id="KW-0007">Acetylation</keyword>
<keyword id="KW-0106">Calcium</keyword>
<keyword id="KW-0148">Chlorophyll</keyword>
<keyword id="KW-0150">Chloroplast</keyword>
<keyword id="KW-0157">Chromophore</keyword>
<keyword id="KW-0249">Electron transport</keyword>
<keyword id="KW-0359">Herbicide resistance</keyword>
<keyword id="KW-0408">Iron</keyword>
<keyword id="KW-0460">Magnesium</keyword>
<keyword id="KW-0464">Manganese</keyword>
<keyword id="KW-0472">Membrane</keyword>
<keyword id="KW-0479">Metal-binding</keyword>
<keyword id="KW-0560">Oxidoreductase</keyword>
<keyword id="KW-0597">Phosphoprotein</keyword>
<keyword id="KW-0602">Photosynthesis</keyword>
<keyword id="KW-0604">Photosystem II</keyword>
<keyword id="KW-0934">Plastid</keyword>
<keyword id="KW-1185">Reference proteome</keyword>
<keyword id="KW-0793">Thylakoid</keyword>
<keyword id="KW-0812">Transmembrane</keyword>
<keyword id="KW-1133">Transmembrane helix</keyword>
<keyword id="KW-0813">Transport</keyword>
<name>PSBA_SOLTU</name>
<gene>
    <name evidence="1" type="primary">psbA</name>
</gene>